<accession>P27584</accession>
<accession>O74768</accession>
<organism>
    <name type="scientific">Schizosaccharomyces pombe (strain 972 / ATCC 24843)</name>
    <name type="common">Fission yeast</name>
    <dbReference type="NCBI Taxonomy" id="284812"/>
    <lineage>
        <taxon>Eukaryota</taxon>
        <taxon>Fungi</taxon>
        <taxon>Dikarya</taxon>
        <taxon>Ascomycota</taxon>
        <taxon>Taphrinomycotina</taxon>
        <taxon>Schizosaccharomycetes</taxon>
        <taxon>Schizosaccharomycetales</taxon>
        <taxon>Schizosaccharomycetaceae</taxon>
        <taxon>Schizosaccharomyces</taxon>
    </lineage>
</organism>
<proteinExistence type="inferred from homology"/>
<name>GPA1_SCHPO</name>
<sequence>MGCMSSKYADTSGGEVIQKKLSDTQTSNSSTTGSQNARVPVLENWLNIVLRGKPQNVESSGVRVKGNSTSGGNDIKVLLLGAGDSGKTTIMKQMRLLYSPGFSQVVRKQYRVMIFENIISSLCLLLEAMDNSNVSLLPENEKYRAVILRKHTSQPNEPFSPEIYEAVHALTLDTKLRTVQSCGTNLSLLDNFYYYQDHIDRIFDPQYIPSDQDILHCRIKTTGISEETFLLNRHHYRFFDVGGQRSERRKWIHCFENVTALLFLVSLAGYDQCLVEDNSGNQMQEALLLWDSICNSSWFSESAMILFLNKLDLFKRKVHISPIQKHFPDYQEVGSTPTFVQTQCPLADNAVRSGMYYFYLKFESLNRIASRSCYCHFTTATDTSLLQRVMVSVQDTIMSNNLQSLMF</sequence>
<reference key="1">
    <citation type="journal article" date="1991" name="Proc. Natl. Acad. Sci. U.S.A.">
        <title>Isolation and characterization of a gene encoding a G-protein alpha subunit from Schizosaccharomyces pombe: involvement in mating and sporulation pathways.</title>
        <authorList>
            <person name="Obara T."/>
            <person name="Nakafuku M."/>
            <person name="Yamamoto M."/>
            <person name="Kaziro Y."/>
        </authorList>
    </citation>
    <scope>NUCLEOTIDE SEQUENCE [GENOMIC DNA]</scope>
</reference>
<reference key="2">
    <citation type="journal article" date="2002" name="Nature">
        <title>The genome sequence of Schizosaccharomyces pombe.</title>
        <authorList>
            <person name="Wood V."/>
            <person name="Gwilliam R."/>
            <person name="Rajandream M.A."/>
            <person name="Lyne M.H."/>
            <person name="Lyne R."/>
            <person name="Stewart A."/>
            <person name="Sgouros J.G."/>
            <person name="Peat N."/>
            <person name="Hayles J."/>
            <person name="Baker S.G."/>
            <person name="Basham D."/>
            <person name="Bowman S."/>
            <person name="Brooks K."/>
            <person name="Brown D."/>
            <person name="Brown S."/>
            <person name="Chillingworth T."/>
            <person name="Churcher C.M."/>
            <person name="Collins M."/>
            <person name="Connor R."/>
            <person name="Cronin A."/>
            <person name="Davis P."/>
            <person name="Feltwell T."/>
            <person name="Fraser A."/>
            <person name="Gentles S."/>
            <person name="Goble A."/>
            <person name="Hamlin N."/>
            <person name="Harris D.E."/>
            <person name="Hidalgo J."/>
            <person name="Hodgson G."/>
            <person name="Holroyd S."/>
            <person name="Hornsby T."/>
            <person name="Howarth S."/>
            <person name="Huckle E.J."/>
            <person name="Hunt S."/>
            <person name="Jagels K."/>
            <person name="James K.D."/>
            <person name="Jones L."/>
            <person name="Jones M."/>
            <person name="Leather S."/>
            <person name="McDonald S."/>
            <person name="McLean J."/>
            <person name="Mooney P."/>
            <person name="Moule S."/>
            <person name="Mungall K.L."/>
            <person name="Murphy L.D."/>
            <person name="Niblett D."/>
            <person name="Odell C."/>
            <person name="Oliver K."/>
            <person name="O'Neil S."/>
            <person name="Pearson D."/>
            <person name="Quail M.A."/>
            <person name="Rabbinowitsch E."/>
            <person name="Rutherford K.M."/>
            <person name="Rutter S."/>
            <person name="Saunders D."/>
            <person name="Seeger K."/>
            <person name="Sharp S."/>
            <person name="Skelton J."/>
            <person name="Simmonds M.N."/>
            <person name="Squares R."/>
            <person name="Squares S."/>
            <person name="Stevens K."/>
            <person name="Taylor K."/>
            <person name="Taylor R.G."/>
            <person name="Tivey A."/>
            <person name="Walsh S.V."/>
            <person name="Warren T."/>
            <person name="Whitehead S."/>
            <person name="Woodward J.R."/>
            <person name="Volckaert G."/>
            <person name="Aert R."/>
            <person name="Robben J."/>
            <person name="Grymonprez B."/>
            <person name="Weltjens I."/>
            <person name="Vanstreels E."/>
            <person name="Rieger M."/>
            <person name="Schaefer M."/>
            <person name="Mueller-Auer S."/>
            <person name="Gabel C."/>
            <person name="Fuchs M."/>
            <person name="Duesterhoeft A."/>
            <person name="Fritzc C."/>
            <person name="Holzer E."/>
            <person name="Moestl D."/>
            <person name="Hilbert H."/>
            <person name="Borzym K."/>
            <person name="Langer I."/>
            <person name="Beck A."/>
            <person name="Lehrach H."/>
            <person name="Reinhardt R."/>
            <person name="Pohl T.M."/>
            <person name="Eger P."/>
            <person name="Zimmermann W."/>
            <person name="Wedler H."/>
            <person name="Wambutt R."/>
            <person name="Purnelle B."/>
            <person name="Goffeau A."/>
            <person name="Cadieu E."/>
            <person name="Dreano S."/>
            <person name="Gloux S."/>
            <person name="Lelaure V."/>
            <person name="Mottier S."/>
            <person name="Galibert F."/>
            <person name="Aves S.J."/>
            <person name="Xiang Z."/>
            <person name="Hunt C."/>
            <person name="Moore K."/>
            <person name="Hurst S.M."/>
            <person name="Lucas M."/>
            <person name="Rochet M."/>
            <person name="Gaillardin C."/>
            <person name="Tallada V.A."/>
            <person name="Garzon A."/>
            <person name="Thode G."/>
            <person name="Daga R.R."/>
            <person name="Cruzado L."/>
            <person name="Jimenez J."/>
            <person name="Sanchez M."/>
            <person name="del Rey F."/>
            <person name="Benito J."/>
            <person name="Dominguez A."/>
            <person name="Revuelta J.L."/>
            <person name="Moreno S."/>
            <person name="Armstrong J."/>
            <person name="Forsburg S.L."/>
            <person name="Cerutti L."/>
            <person name="Lowe T."/>
            <person name="McCombie W.R."/>
            <person name="Paulsen I."/>
            <person name="Potashkin J."/>
            <person name="Shpakovski G.V."/>
            <person name="Ussery D."/>
            <person name="Barrell B.G."/>
            <person name="Nurse P."/>
        </authorList>
    </citation>
    <scope>NUCLEOTIDE SEQUENCE [LARGE SCALE GENOMIC DNA]</scope>
    <source>
        <strain>972 / ATCC 24843</strain>
    </source>
</reference>
<gene>
    <name type="primary">gpa1</name>
    <name type="ORF">SPBC24C6.06</name>
</gene>
<keyword id="KW-0342">GTP-binding</keyword>
<keyword id="KW-0378">Hydrolase</keyword>
<keyword id="KW-0449">Lipoprotein</keyword>
<keyword id="KW-0460">Magnesium</keyword>
<keyword id="KW-0479">Metal-binding</keyword>
<keyword id="KW-0519">Myristate</keyword>
<keyword id="KW-0547">Nucleotide-binding</keyword>
<keyword id="KW-0564">Palmitate</keyword>
<keyword id="KW-0589">Pheromone response</keyword>
<keyword id="KW-1185">Reference proteome</keyword>
<keyword id="KW-0749">Sporulation</keyword>
<keyword id="KW-0807">Transducer</keyword>
<dbReference type="EMBL" id="M64286">
    <property type="protein sequence ID" value="AAA35306.1"/>
    <property type="molecule type" value="Genomic_DNA"/>
</dbReference>
<dbReference type="EMBL" id="CU329671">
    <property type="protein sequence ID" value="CAA21150.1"/>
    <property type="molecule type" value="Genomic_DNA"/>
</dbReference>
<dbReference type="PIR" id="A41106">
    <property type="entry name" value="A41106"/>
</dbReference>
<dbReference type="PIR" id="T39970">
    <property type="entry name" value="T39970"/>
</dbReference>
<dbReference type="RefSeq" id="NP_595960.1">
    <property type="nucleotide sequence ID" value="NM_001021869.2"/>
</dbReference>
<dbReference type="SMR" id="P27584"/>
<dbReference type="BioGRID" id="276942">
    <property type="interactions" value="9"/>
</dbReference>
<dbReference type="FunCoup" id="P27584">
    <property type="interactions" value="106"/>
</dbReference>
<dbReference type="STRING" id="284812.P27584"/>
<dbReference type="iPTMnet" id="P27584"/>
<dbReference type="PaxDb" id="4896-SPBC24C6.06.1"/>
<dbReference type="EnsemblFungi" id="SPBC24C6.06.1">
    <property type="protein sequence ID" value="SPBC24C6.06.1:pep"/>
    <property type="gene ID" value="SPBC24C6.06"/>
</dbReference>
<dbReference type="GeneID" id="2540414"/>
<dbReference type="KEGG" id="spo:2540414"/>
<dbReference type="PomBase" id="SPBC24C6.06">
    <property type="gene designation" value="gpa1"/>
</dbReference>
<dbReference type="VEuPathDB" id="FungiDB:SPBC24C6.06"/>
<dbReference type="eggNOG" id="KOG0082">
    <property type="taxonomic scope" value="Eukaryota"/>
</dbReference>
<dbReference type="HOGENOM" id="CLU_014184_6_0_1"/>
<dbReference type="InParanoid" id="P27584"/>
<dbReference type="OMA" id="INYGHPD"/>
<dbReference type="PhylomeDB" id="P27584"/>
<dbReference type="Reactome" id="R-SPO-112043">
    <property type="pathway name" value="PLC beta mediated events"/>
</dbReference>
<dbReference type="Reactome" id="R-SPO-202040">
    <property type="pathway name" value="G-protein activation"/>
</dbReference>
<dbReference type="Reactome" id="R-SPO-399997">
    <property type="pathway name" value="Acetylcholine regulates insulin secretion"/>
</dbReference>
<dbReference type="Reactome" id="R-SPO-416476">
    <property type="pathway name" value="G alpha (q) signalling events"/>
</dbReference>
<dbReference type="Reactome" id="R-SPO-416482">
    <property type="pathway name" value="G alpha (12/13) signalling events"/>
</dbReference>
<dbReference type="Reactome" id="R-SPO-418592">
    <property type="pathway name" value="ADP signalling through P2Y purinoceptor 1"/>
</dbReference>
<dbReference type="Reactome" id="R-SPO-434316">
    <property type="pathway name" value="Fatty Acids bound to GPR40 (FFAR1) regulate insulin secretion"/>
</dbReference>
<dbReference type="Reactome" id="R-SPO-9013148">
    <property type="pathway name" value="CDC42 GTPase cycle"/>
</dbReference>
<dbReference type="Reactome" id="R-SPO-9856530">
    <property type="pathway name" value="High laminar flow shear stress activates signaling by PIEZO1 and PECAM1:CDH5:KDR in endothelial cells"/>
</dbReference>
<dbReference type="PRO" id="PR:P27584"/>
<dbReference type="Proteomes" id="UP000002485">
    <property type="component" value="Chromosome II"/>
</dbReference>
<dbReference type="GO" id="GO:0090726">
    <property type="term" value="C:cortical dynamic polarity patch"/>
    <property type="evidence" value="ECO:0000314"/>
    <property type="project" value="PomBase"/>
</dbReference>
<dbReference type="GO" id="GO:0005737">
    <property type="term" value="C:cytoplasm"/>
    <property type="evidence" value="ECO:0000318"/>
    <property type="project" value="GO_Central"/>
</dbReference>
<dbReference type="GO" id="GO:0005829">
    <property type="term" value="C:cytosol"/>
    <property type="evidence" value="ECO:0007005"/>
    <property type="project" value="PomBase"/>
</dbReference>
<dbReference type="GO" id="GO:0005834">
    <property type="term" value="C:heterotrimeric G-protein complex"/>
    <property type="evidence" value="ECO:0000318"/>
    <property type="project" value="GO_Central"/>
</dbReference>
<dbReference type="GO" id="GO:0005886">
    <property type="term" value="C:plasma membrane"/>
    <property type="evidence" value="ECO:0000314"/>
    <property type="project" value="PomBase"/>
</dbReference>
<dbReference type="GO" id="GO:0001664">
    <property type="term" value="F:G protein-coupled receptor binding"/>
    <property type="evidence" value="ECO:0000318"/>
    <property type="project" value="GO_Central"/>
</dbReference>
<dbReference type="GO" id="GO:0031683">
    <property type="term" value="F:G-protein beta/gamma-subunit complex binding"/>
    <property type="evidence" value="ECO:0000318"/>
    <property type="project" value="GO_Central"/>
</dbReference>
<dbReference type="GO" id="GO:0005525">
    <property type="term" value="F:GTP binding"/>
    <property type="evidence" value="ECO:0007669"/>
    <property type="project" value="UniProtKB-KW"/>
</dbReference>
<dbReference type="GO" id="GO:0003924">
    <property type="term" value="F:GTPase activity"/>
    <property type="evidence" value="ECO:0000315"/>
    <property type="project" value="PomBase"/>
</dbReference>
<dbReference type="GO" id="GO:0046872">
    <property type="term" value="F:metal ion binding"/>
    <property type="evidence" value="ECO:0007669"/>
    <property type="project" value="UniProtKB-KW"/>
</dbReference>
<dbReference type="GO" id="GO:0007186">
    <property type="term" value="P:G protein-coupled receptor signaling pathway"/>
    <property type="evidence" value="ECO:0007669"/>
    <property type="project" value="InterPro"/>
</dbReference>
<dbReference type="GO" id="GO:0043409">
    <property type="term" value="P:negative regulation of MAPK cascade"/>
    <property type="evidence" value="ECO:0000315"/>
    <property type="project" value="PomBase"/>
</dbReference>
<dbReference type="GO" id="GO:0180040">
    <property type="term" value="P:negative regulation of pheromone response MAPK cascade"/>
    <property type="evidence" value="ECO:0000315"/>
    <property type="project" value="PomBase"/>
</dbReference>
<dbReference type="GO" id="GO:0031139">
    <property type="term" value="P:positive regulation of conjugation with cellular fusion"/>
    <property type="evidence" value="ECO:0000315"/>
    <property type="project" value="PomBase"/>
</dbReference>
<dbReference type="GO" id="GO:0019236">
    <property type="term" value="P:response to pheromone"/>
    <property type="evidence" value="ECO:0007669"/>
    <property type="project" value="UniProtKB-KW"/>
</dbReference>
<dbReference type="GO" id="GO:0030435">
    <property type="term" value="P:sporulation resulting in formation of a cellular spore"/>
    <property type="evidence" value="ECO:0007669"/>
    <property type="project" value="UniProtKB-KW"/>
</dbReference>
<dbReference type="CDD" id="cd00066">
    <property type="entry name" value="G-alpha"/>
    <property type="match status" value="1"/>
</dbReference>
<dbReference type="FunFam" id="3.40.50.300:FF:000051">
    <property type="entry name" value="Guanine nucleotide-binding protein subunit alpha"/>
    <property type="match status" value="1"/>
</dbReference>
<dbReference type="Gene3D" id="1.10.400.10">
    <property type="entry name" value="GI Alpha 1, domain 2-like"/>
    <property type="match status" value="1"/>
</dbReference>
<dbReference type="Gene3D" id="3.40.50.300">
    <property type="entry name" value="P-loop containing nucleotide triphosphate hydrolases"/>
    <property type="match status" value="1"/>
</dbReference>
<dbReference type="InterPro" id="IPR002975">
    <property type="entry name" value="Fungi_Gprotein_alpha"/>
</dbReference>
<dbReference type="InterPro" id="IPR001019">
    <property type="entry name" value="Gprotein_alpha_su"/>
</dbReference>
<dbReference type="InterPro" id="IPR011025">
    <property type="entry name" value="GproteinA_insert"/>
</dbReference>
<dbReference type="InterPro" id="IPR027417">
    <property type="entry name" value="P-loop_NTPase"/>
</dbReference>
<dbReference type="PANTHER" id="PTHR10218">
    <property type="entry name" value="GTP-BINDING PROTEIN ALPHA SUBUNIT"/>
    <property type="match status" value="1"/>
</dbReference>
<dbReference type="PANTHER" id="PTHR10218:SF242">
    <property type="entry name" value="GUANINE NUCLEOTIDE-BINDING PROTEIN ALPHA-1 SUBUNIT"/>
    <property type="match status" value="1"/>
</dbReference>
<dbReference type="Pfam" id="PF00503">
    <property type="entry name" value="G-alpha"/>
    <property type="match status" value="1"/>
</dbReference>
<dbReference type="PRINTS" id="PR00318">
    <property type="entry name" value="GPROTEINA"/>
</dbReference>
<dbReference type="PRINTS" id="PR01241">
    <property type="entry name" value="GPROTEINAFNG"/>
</dbReference>
<dbReference type="SMART" id="SM00275">
    <property type="entry name" value="G_alpha"/>
    <property type="match status" value="1"/>
</dbReference>
<dbReference type="SUPFAM" id="SSF52540">
    <property type="entry name" value="P-loop containing nucleoside triphosphate hydrolases"/>
    <property type="match status" value="1"/>
</dbReference>
<dbReference type="SUPFAM" id="SSF47895">
    <property type="entry name" value="Transducin (alpha subunit), insertion domain"/>
    <property type="match status" value="1"/>
</dbReference>
<dbReference type="PROSITE" id="PS51882">
    <property type="entry name" value="G_ALPHA"/>
    <property type="match status" value="1"/>
</dbReference>
<feature type="initiator methionine" description="Removed" evidence="1">
    <location>
        <position position="1"/>
    </location>
</feature>
<feature type="chain" id="PRO_0000203608" description="Guanine nucleotide-binding protein alpha-1 subunit">
    <location>
        <begin position="2"/>
        <end position="407"/>
    </location>
</feature>
<feature type="domain" description="G-alpha" evidence="4">
    <location>
        <begin position="73"/>
        <end position="407"/>
    </location>
</feature>
<feature type="region of interest" description="G1 motif" evidence="4">
    <location>
        <begin position="76"/>
        <end position="89"/>
    </location>
</feature>
<feature type="region of interest" description="G2 motif" evidence="4">
    <location>
        <begin position="213"/>
        <end position="221"/>
    </location>
</feature>
<feature type="region of interest" description="G3 motif" evidence="4">
    <location>
        <begin position="236"/>
        <end position="245"/>
    </location>
</feature>
<feature type="region of interest" description="G4 motif" evidence="4">
    <location>
        <begin position="305"/>
        <end position="312"/>
    </location>
</feature>
<feature type="region of interest" description="G5 motif" evidence="4">
    <location>
        <begin position="378"/>
        <end position="383"/>
    </location>
</feature>
<feature type="binding site" evidence="3">
    <location>
        <position position="84"/>
    </location>
    <ligand>
        <name>GTP</name>
        <dbReference type="ChEBI" id="CHEBI:37565"/>
    </ligand>
</feature>
<feature type="binding site" evidence="3">
    <location>
        <position position="85"/>
    </location>
    <ligand>
        <name>GTP</name>
        <dbReference type="ChEBI" id="CHEBI:37565"/>
    </ligand>
</feature>
<feature type="binding site" evidence="3">
    <location>
        <position position="86"/>
    </location>
    <ligand>
        <name>GTP</name>
        <dbReference type="ChEBI" id="CHEBI:37565"/>
    </ligand>
</feature>
<feature type="binding site" evidence="3">
    <location>
        <position position="87"/>
    </location>
    <ligand>
        <name>GTP</name>
        <dbReference type="ChEBI" id="CHEBI:37565"/>
    </ligand>
</feature>
<feature type="binding site" evidence="3">
    <location>
        <position position="88"/>
    </location>
    <ligand>
        <name>GTP</name>
        <dbReference type="ChEBI" id="CHEBI:37565"/>
    </ligand>
</feature>
<feature type="binding site" evidence="3">
    <location>
        <position position="88"/>
    </location>
    <ligand>
        <name>Mg(2+)</name>
        <dbReference type="ChEBI" id="CHEBI:18420"/>
    </ligand>
</feature>
<feature type="binding site" evidence="3">
    <location>
        <position position="89"/>
    </location>
    <ligand>
        <name>GTP</name>
        <dbReference type="ChEBI" id="CHEBI:37565"/>
    </ligand>
</feature>
<feature type="binding site" evidence="3">
    <location>
        <position position="190"/>
    </location>
    <ligand>
        <name>GTP</name>
        <dbReference type="ChEBI" id="CHEBI:37565"/>
    </ligand>
</feature>
<feature type="binding site" evidence="3">
    <location>
        <position position="215"/>
    </location>
    <ligand>
        <name>GTP</name>
        <dbReference type="ChEBI" id="CHEBI:37565"/>
    </ligand>
</feature>
<feature type="binding site" evidence="3">
    <location>
        <position position="221"/>
    </location>
    <ligand>
        <name>GTP</name>
        <dbReference type="ChEBI" id="CHEBI:37565"/>
    </ligand>
</feature>
<feature type="binding site" evidence="3">
    <location>
        <position position="221"/>
    </location>
    <ligand>
        <name>Mg(2+)</name>
        <dbReference type="ChEBI" id="CHEBI:18420"/>
    </ligand>
</feature>
<feature type="binding site" evidence="3">
    <location>
        <position position="243"/>
    </location>
    <ligand>
        <name>GTP</name>
        <dbReference type="ChEBI" id="CHEBI:37565"/>
    </ligand>
</feature>
<feature type="binding site" evidence="3">
    <location>
        <position position="309"/>
    </location>
    <ligand>
        <name>GTP</name>
        <dbReference type="ChEBI" id="CHEBI:37565"/>
    </ligand>
</feature>
<feature type="binding site" evidence="3">
    <location>
        <position position="310"/>
    </location>
    <ligand>
        <name>GTP</name>
        <dbReference type="ChEBI" id="CHEBI:37565"/>
    </ligand>
</feature>
<feature type="binding site" evidence="3">
    <location>
        <position position="312"/>
    </location>
    <ligand>
        <name>GTP</name>
        <dbReference type="ChEBI" id="CHEBI:37565"/>
    </ligand>
</feature>
<feature type="binding site" evidence="3">
    <location>
        <position position="380"/>
    </location>
    <ligand>
        <name>GTP</name>
        <dbReference type="ChEBI" id="CHEBI:37565"/>
    </ligand>
</feature>
<feature type="lipid moiety-binding region" description="N-myristoyl glycine" evidence="2">
    <location>
        <position position="2"/>
    </location>
</feature>
<feature type="lipid moiety-binding region" description="S-palmitoyl cysteine" evidence="2">
    <location>
        <position position="3"/>
    </location>
</feature>
<feature type="sequence conflict" description="In Ref. 1; AAA35306." evidence="5" ref="1">
    <original>VHIS</original>
    <variation>GSHF</variation>
    <location>
        <begin position="318"/>
        <end position="321"/>
    </location>
</feature>
<comment type="function">
    <text>Implicated in the mating and sporulation pathway. Probably coupled to mating-factor receptors. May act in concert with Ras1.</text>
</comment>
<comment type="cofactor">
    <cofactor evidence="3">
        <name>Mg(2+)</name>
        <dbReference type="ChEBI" id="CHEBI:18420"/>
    </cofactor>
</comment>
<comment type="subunit">
    <text>G proteins are composed of 3 units; alpha, beta and gamma. The alpha chain contains the guanine nucleotide binding site.</text>
</comment>
<comment type="similarity">
    <text evidence="5">Belongs to the G-alpha family. G(q) subfamily.</text>
</comment>
<evidence type="ECO:0000250" key="1"/>
<evidence type="ECO:0000250" key="2">
    <source>
        <dbReference type="UniProtKB" id="P08539"/>
    </source>
</evidence>
<evidence type="ECO:0000250" key="3">
    <source>
        <dbReference type="UniProtKB" id="P18064"/>
    </source>
</evidence>
<evidence type="ECO:0000255" key="4">
    <source>
        <dbReference type="PROSITE-ProRule" id="PRU01230"/>
    </source>
</evidence>
<evidence type="ECO:0000305" key="5"/>
<protein>
    <recommendedName>
        <fullName>Guanine nucleotide-binding protein alpha-1 subunit</fullName>
    </recommendedName>
    <alternativeName>
        <fullName>GP1-alpha</fullName>
    </alternativeName>
</protein>